<accession>Q05006</accession>
<protein>
    <recommendedName>
        <fullName>Cell division control protein 2 homolog 2</fullName>
        <ecNumber>2.7.11.22</ecNumber>
    </recommendedName>
</protein>
<reference key="1">
    <citation type="journal article" date="1993" name="Plant J.">
        <title>cdc2MsB, a cognate cdc2 gene from alfalfa, complements the G1/S but not the G2/M transition of budding yeast cdc28 mutants.</title>
        <authorList>
            <person name="Hirt H."/>
            <person name="Pay A."/>
            <person name="Boegre L."/>
            <person name="Meskiene I."/>
            <person name="Heberle-Bors E."/>
        </authorList>
    </citation>
    <scope>NUCLEOTIDE SEQUENCE [MRNA]</scope>
    <source>
        <tissue>Stem</tissue>
    </source>
</reference>
<feature type="chain" id="PRO_0000085754" description="Cell division control protein 2 homolog 2">
    <location>
        <begin position="1"/>
        <end position="294"/>
    </location>
</feature>
<feature type="domain" description="Protein kinase" evidence="2">
    <location>
        <begin position="4"/>
        <end position="287"/>
    </location>
</feature>
<feature type="active site" description="Proton acceptor" evidence="2 3">
    <location>
        <position position="127"/>
    </location>
</feature>
<feature type="binding site" evidence="2">
    <location>
        <begin position="10"/>
        <end position="18"/>
    </location>
    <ligand>
        <name>ATP</name>
        <dbReference type="ChEBI" id="CHEBI:30616"/>
    </ligand>
</feature>
<feature type="binding site" evidence="2">
    <location>
        <position position="33"/>
    </location>
    <ligand>
        <name>ATP</name>
        <dbReference type="ChEBI" id="CHEBI:30616"/>
    </ligand>
</feature>
<feature type="modified residue" description="Phosphothreonine" evidence="1">
    <location>
        <position position="14"/>
    </location>
</feature>
<feature type="modified residue" description="Phosphotyrosine" evidence="1">
    <location>
        <position position="15"/>
    </location>
</feature>
<feature type="modified residue" description="Phosphothreonine; by CAK" evidence="1">
    <location>
        <position position="161"/>
    </location>
</feature>
<evidence type="ECO:0000250" key="1"/>
<evidence type="ECO:0000255" key="2">
    <source>
        <dbReference type="PROSITE-ProRule" id="PRU00159"/>
    </source>
</evidence>
<evidence type="ECO:0000255" key="3">
    <source>
        <dbReference type="PROSITE-ProRule" id="PRU10027"/>
    </source>
</evidence>
<evidence type="ECO:0000305" key="4"/>
<dbReference type="EC" id="2.7.11.22"/>
<dbReference type="EMBL" id="X70707">
    <property type="protein sequence ID" value="CAA50038.1"/>
    <property type="molecule type" value="mRNA"/>
</dbReference>
<dbReference type="PIR" id="S31332">
    <property type="entry name" value="S31332"/>
</dbReference>
<dbReference type="SMR" id="Q05006"/>
<dbReference type="BRENDA" id="2.7.11.22">
    <property type="organism ID" value="3078"/>
</dbReference>
<dbReference type="GO" id="GO:0000307">
    <property type="term" value="C:cyclin-dependent protein kinase holoenzyme complex"/>
    <property type="evidence" value="ECO:0007669"/>
    <property type="project" value="TreeGrafter"/>
</dbReference>
<dbReference type="GO" id="GO:0005737">
    <property type="term" value="C:cytoplasm"/>
    <property type="evidence" value="ECO:0007669"/>
    <property type="project" value="TreeGrafter"/>
</dbReference>
<dbReference type="GO" id="GO:0005634">
    <property type="term" value="C:nucleus"/>
    <property type="evidence" value="ECO:0007669"/>
    <property type="project" value="TreeGrafter"/>
</dbReference>
<dbReference type="GO" id="GO:0005524">
    <property type="term" value="F:ATP binding"/>
    <property type="evidence" value="ECO:0007669"/>
    <property type="project" value="UniProtKB-KW"/>
</dbReference>
<dbReference type="GO" id="GO:0030332">
    <property type="term" value="F:cyclin binding"/>
    <property type="evidence" value="ECO:0007669"/>
    <property type="project" value="TreeGrafter"/>
</dbReference>
<dbReference type="GO" id="GO:0004693">
    <property type="term" value="F:cyclin-dependent protein serine/threonine kinase activity"/>
    <property type="evidence" value="ECO:0007669"/>
    <property type="project" value="UniProtKB-EC"/>
</dbReference>
<dbReference type="GO" id="GO:0106310">
    <property type="term" value="F:protein serine kinase activity"/>
    <property type="evidence" value="ECO:0007669"/>
    <property type="project" value="RHEA"/>
</dbReference>
<dbReference type="GO" id="GO:0051301">
    <property type="term" value="P:cell division"/>
    <property type="evidence" value="ECO:0007669"/>
    <property type="project" value="UniProtKB-KW"/>
</dbReference>
<dbReference type="GO" id="GO:0000082">
    <property type="term" value="P:G1/S transition of mitotic cell cycle"/>
    <property type="evidence" value="ECO:0007669"/>
    <property type="project" value="TreeGrafter"/>
</dbReference>
<dbReference type="GO" id="GO:0010389">
    <property type="term" value="P:regulation of G2/M transition of mitotic cell cycle"/>
    <property type="evidence" value="ECO:0007669"/>
    <property type="project" value="TreeGrafter"/>
</dbReference>
<dbReference type="GO" id="GO:0010468">
    <property type="term" value="P:regulation of gene expression"/>
    <property type="evidence" value="ECO:0007669"/>
    <property type="project" value="TreeGrafter"/>
</dbReference>
<dbReference type="GO" id="GO:0051445">
    <property type="term" value="P:regulation of meiotic cell cycle"/>
    <property type="evidence" value="ECO:0007669"/>
    <property type="project" value="TreeGrafter"/>
</dbReference>
<dbReference type="GO" id="GO:0007165">
    <property type="term" value="P:signal transduction"/>
    <property type="evidence" value="ECO:0007669"/>
    <property type="project" value="TreeGrafter"/>
</dbReference>
<dbReference type="CDD" id="cd07835">
    <property type="entry name" value="STKc_CDK1_CdkB_like"/>
    <property type="match status" value="1"/>
</dbReference>
<dbReference type="FunFam" id="3.30.200.20:FF:000187">
    <property type="entry name" value="Cell division control protein 2"/>
    <property type="match status" value="1"/>
</dbReference>
<dbReference type="FunFam" id="1.10.510.10:FF:000280">
    <property type="entry name" value="Cell division control protein 2 homolog"/>
    <property type="match status" value="1"/>
</dbReference>
<dbReference type="Gene3D" id="3.30.200.20">
    <property type="entry name" value="Phosphorylase Kinase, domain 1"/>
    <property type="match status" value="1"/>
</dbReference>
<dbReference type="Gene3D" id="1.10.510.10">
    <property type="entry name" value="Transferase(Phosphotransferase) domain 1"/>
    <property type="match status" value="1"/>
</dbReference>
<dbReference type="InterPro" id="IPR050108">
    <property type="entry name" value="CDK"/>
</dbReference>
<dbReference type="InterPro" id="IPR011009">
    <property type="entry name" value="Kinase-like_dom_sf"/>
</dbReference>
<dbReference type="InterPro" id="IPR000719">
    <property type="entry name" value="Prot_kinase_dom"/>
</dbReference>
<dbReference type="InterPro" id="IPR017441">
    <property type="entry name" value="Protein_kinase_ATP_BS"/>
</dbReference>
<dbReference type="InterPro" id="IPR008271">
    <property type="entry name" value="Ser/Thr_kinase_AS"/>
</dbReference>
<dbReference type="PANTHER" id="PTHR24056">
    <property type="entry name" value="CELL DIVISION PROTEIN KINASE"/>
    <property type="match status" value="1"/>
</dbReference>
<dbReference type="PANTHER" id="PTHR24056:SF548">
    <property type="entry name" value="CYCLIN-DEPENDENT KINASE A-1"/>
    <property type="match status" value="1"/>
</dbReference>
<dbReference type="Pfam" id="PF00069">
    <property type="entry name" value="Pkinase"/>
    <property type="match status" value="1"/>
</dbReference>
<dbReference type="SMART" id="SM00220">
    <property type="entry name" value="S_TKc"/>
    <property type="match status" value="1"/>
</dbReference>
<dbReference type="SUPFAM" id="SSF56112">
    <property type="entry name" value="Protein kinase-like (PK-like)"/>
    <property type="match status" value="1"/>
</dbReference>
<dbReference type="PROSITE" id="PS00107">
    <property type="entry name" value="PROTEIN_KINASE_ATP"/>
    <property type="match status" value="1"/>
</dbReference>
<dbReference type="PROSITE" id="PS50011">
    <property type="entry name" value="PROTEIN_KINASE_DOM"/>
    <property type="match status" value="1"/>
</dbReference>
<dbReference type="PROSITE" id="PS00108">
    <property type="entry name" value="PROTEIN_KINASE_ST"/>
    <property type="match status" value="1"/>
</dbReference>
<sequence length="294" mass="33886">MEQYEKVEKIGEGTYGVVYKARDRATNETIALKKIRLEQEDEGVPSTAIREISLLKEMQHRNIVRLQDVVHSEKRLYLVFEYLDLDLKKFMDSSPEFAKDQRQIKMFLYQILCGIAYCHSHRVLHRDLKPQNLLIDRSSNAVKLADFGLARAFGIPVRTFTHEVVTLWYRAPEILLGSRHYSTPVDVWSVGCIFAEMINQRPLFPGDSEIDELFKIFRITGTPNEETWPGVTSLPDFKSAFPKWPAKDLATQVPNLEPAGLDLLSSTCRLDPTRRITARGALEHEYFKDIKFVP</sequence>
<organism>
    <name type="scientific">Medicago sativa</name>
    <name type="common">Alfalfa</name>
    <dbReference type="NCBI Taxonomy" id="3879"/>
    <lineage>
        <taxon>Eukaryota</taxon>
        <taxon>Viridiplantae</taxon>
        <taxon>Streptophyta</taxon>
        <taxon>Embryophyta</taxon>
        <taxon>Tracheophyta</taxon>
        <taxon>Spermatophyta</taxon>
        <taxon>Magnoliopsida</taxon>
        <taxon>eudicotyledons</taxon>
        <taxon>Gunneridae</taxon>
        <taxon>Pentapetalae</taxon>
        <taxon>rosids</taxon>
        <taxon>fabids</taxon>
        <taxon>Fabales</taxon>
        <taxon>Fabaceae</taxon>
        <taxon>Papilionoideae</taxon>
        <taxon>50 kb inversion clade</taxon>
        <taxon>NPAAA clade</taxon>
        <taxon>Hologalegina</taxon>
        <taxon>IRL clade</taxon>
        <taxon>Trifolieae</taxon>
        <taxon>Medicago</taxon>
    </lineage>
</organism>
<proteinExistence type="evidence at transcript level"/>
<gene>
    <name type="primary">CDC2B</name>
</gene>
<comment type="function">
    <text>Plays a key role in the control of the eukaryotic cell cycle. Component of the kinase complex that phosphorylates the repetitive C-terminus of RNA polymerase II.</text>
</comment>
<comment type="catalytic activity">
    <reaction>
        <text>L-seryl-[protein] + ATP = O-phospho-L-seryl-[protein] + ADP + H(+)</text>
        <dbReference type="Rhea" id="RHEA:17989"/>
        <dbReference type="Rhea" id="RHEA-COMP:9863"/>
        <dbReference type="Rhea" id="RHEA-COMP:11604"/>
        <dbReference type="ChEBI" id="CHEBI:15378"/>
        <dbReference type="ChEBI" id="CHEBI:29999"/>
        <dbReference type="ChEBI" id="CHEBI:30616"/>
        <dbReference type="ChEBI" id="CHEBI:83421"/>
        <dbReference type="ChEBI" id="CHEBI:456216"/>
        <dbReference type="EC" id="2.7.11.22"/>
    </reaction>
</comment>
<comment type="catalytic activity">
    <reaction>
        <text>L-threonyl-[protein] + ATP = O-phospho-L-threonyl-[protein] + ADP + H(+)</text>
        <dbReference type="Rhea" id="RHEA:46608"/>
        <dbReference type="Rhea" id="RHEA-COMP:11060"/>
        <dbReference type="Rhea" id="RHEA-COMP:11605"/>
        <dbReference type="ChEBI" id="CHEBI:15378"/>
        <dbReference type="ChEBI" id="CHEBI:30013"/>
        <dbReference type="ChEBI" id="CHEBI:30616"/>
        <dbReference type="ChEBI" id="CHEBI:61977"/>
        <dbReference type="ChEBI" id="CHEBI:456216"/>
        <dbReference type="EC" id="2.7.11.22"/>
    </reaction>
</comment>
<comment type="activity regulation">
    <text evidence="1">Phosphorylation at Thr-14 or Tyr-15 inactivates the enzyme, while phosphorylation at Thr-161 activates it.</text>
</comment>
<comment type="tissue specificity">
    <text>Found in most organs including root, young leaf, stem, vegetative meristem and flower bud.</text>
</comment>
<comment type="similarity">
    <text evidence="4">Belongs to the protein kinase superfamily. CMGC Ser/Thr protein kinase family. CDC2/CDKX subfamily.</text>
</comment>
<keyword id="KW-0067">ATP-binding</keyword>
<keyword id="KW-0131">Cell cycle</keyword>
<keyword id="KW-0132">Cell division</keyword>
<keyword id="KW-0418">Kinase</keyword>
<keyword id="KW-0498">Mitosis</keyword>
<keyword id="KW-0547">Nucleotide-binding</keyword>
<keyword id="KW-0597">Phosphoprotein</keyword>
<keyword id="KW-0723">Serine/threonine-protein kinase</keyword>
<keyword id="KW-0808">Transferase</keyword>
<name>CDC22_MEDSA</name>